<comment type="function">
    <text evidence="1">This protein is located at the 30S-50S ribosomal subunit interface and may play a role in the structure and function of the aminoacyl-tRNA binding site.</text>
</comment>
<comment type="similarity">
    <text evidence="1">Belongs to the bacterial ribosomal protein bL19 family.</text>
</comment>
<evidence type="ECO:0000255" key="1">
    <source>
        <dbReference type="HAMAP-Rule" id="MF_00402"/>
    </source>
</evidence>
<evidence type="ECO:0000305" key="2"/>
<protein>
    <recommendedName>
        <fullName evidence="1">Large ribosomal subunit protein bL19</fullName>
    </recommendedName>
    <alternativeName>
        <fullName evidence="2">50S ribosomal protein L19</fullName>
    </alternativeName>
</protein>
<keyword id="KW-0687">Ribonucleoprotein</keyword>
<keyword id="KW-0689">Ribosomal protein</keyword>
<feature type="chain" id="PRO_1000193835" description="Large ribosomal subunit protein bL19">
    <location>
        <begin position="1"/>
        <end position="115"/>
    </location>
</feature>
<sequence length="115" mass="13133">MSNIIKQLEQEQMKQDVPSFRPGDTVEVKVWVVEGSKKRLQAFEGVVIAIRNRGLHSAFTVRKISNGEGVERVFQTHSPVVDSISVKRRGAVRKAKLYYLRERTGKAARIKERLN</sequence>
<reference key="1">
    <citation type="journal article" date="2009" name="PLoS Genet.">
        <title>Organised genome dynamics in the Escherichia coli species results in highly diverse adaptive paths.</title>
        <authorList>
            <person name="Touchon M."/>
            <person name="Hoede C."/>
            <person name="Tenaillon O."/>
            <person name="Barbe V."/>
            <person name="Baeriswyl S."/>
            <person name="Bidet P."/>
            <person name="Bingen E."/>
            <person name="Bonacorsi S."/>
            <person name="Bouchier C."/>
            <person name="Bouvet O."/>
            <person name="Calteau A."/>
            <person name="Chiapello H."/>
            <person name="Clermont O."/>
            <person name="Cruveiller S."/>
            <person name="Danchin A."/>
            <person name="Diard M."/>
            <person name="Dossat C."/>
            <person name="Karoui M.E."/>
            <person name="Frapy E."/>
            <person name="Garry L."/>
            <person name="Ghigo J.M."/>
            <person name="Gilles A.M."/>
            <person name="Johnson J."/>
            <person name="Le Bouguenec C."/>
            <person name="Lescat M."/>
            <person name="Mangenot S."/>
            <person name="Martinez-Jehanne V."/>
            <person name="Matic I."/>
            <person name="Nassif X."/>
            <person name="Oztas S."/>
            <person name="Petit M.A."/>
            <person name="Pichon C."/>
            <person name="Rouy Z."/>
            <person name="Ruf C.S."/>
            <person name="Schneider D."/>
            <person name="Tourret J."/>
            <person name="Vacherie B."/>
            <person name="Vallenet D."/>
            <person name="Medigue C."/>
            <person name="Rocha E.P.C."/>
            <person name="Denamur E."/>
        </authorList>
    </citation>
    <scope>NUCLEOTIDE SEQUENCE [LARGE SCALE GENOMIC DNA]</scope>
    <source>
        <strain>UMN026 / ExPEC</strain>
    </source>
</reference>
<name>RL19_ECOLU</name>
<accession>B7N6J2</accession>
<dbReference type="EMBL" id="CU928163">
    <property type="protein sequence ID" value="CAR14102.1"/>
    <property type="molecule type" value="Genomic_DNA"/>
</dbReference>
<dbReference type="RefSeq" id="WP_000065253.1">
    <property type="nucleotide sequence ID" value="NC_011751.1"/>
</dbReference>
<dbReference type="RefSeq" id="YP_002413626.1">
    <property type="nucleotide sequence ID" value="NC_011751.1"/>
</dbReference>
<dbReference type="SMR" id="B7N6J2"/>
<dbReference type="STRING" id="585056.ECUMN_2931"/>
<dbReference type="GeneID" id="93774456"/>
<dbReference type="KEGG" id="eum:ECUMN_2931"/>
<dbReference type="PATRIC" id="fig|585056.7.peg.3112"/>
<dbReference type="HOGENOM" id="CLU_103507_2_1_6"/>
<dbReference type="Proteomes" id="UP000007097">
    <property type="component" value="Chromosome"/>
</dbReference>
<dbReference type="GO" id="GO:0022625">
    <property type="term" value="C:cytosolic large ribosomal subunit"/>
    <property type="evidence" value="ECO:0007669"/>
    <property type="project" value="TreeGrafter"/>
</dbReference>
<dbReference type="GO" id="GO:0003735">
    <property type="term" value="F:structural constituent of ribosome"/>
    <property type="evidence" value="ECO:0007669"/>
    <property type="project" value="InterPro"/>
</dbReference>
<dbReference type="GO" id="GO:0006412">
    <property type="term" value="P:translation"/>
    <property type="evidence" value="ECO:0007669"/>
    <property type="project" value="UniProtKB-UniRule"/>
</dbReference>
<dbReference type="FunFam" id="2.30.30.790:FF:000001">
    <property type="entry name" value="50S ribosomal protein L19"/>
    <property type="match status" value="1"/>
</dbReference>
<dbReference type="Gene3D" id="2.30.30.790">
    <property type="match status" value="1"/>
</dbReference>
<dbReference type="HAMAP" id="MF_00402">
    <property type="entry name" value="Ribosomal_bL19"/>
    <property type="match status" value="1"/>
</dbReference>
<dbReference type="InterPro" id="IPR001857">
    <property type="entry name" value="Ribosomal_bL19"/>
</dbReference>
<dbReference type="InterPro" id="IPR018257">
    <property type="entry name" value="Ribosomal_bL19_CS"/>
</dbReference>
<dbReference type="InterPro" id="IPR038657">
    <property type="entry name" value="Ribosomal_bL19_sf"/>
</dbReference>
<dbReference type="InterPro" id="IPR008991">
    <property type="entry name" value="Translation_prot_SH3-like_sf"/>
</dbReference>
<dbReference type="NCBIfam" id="TIGR01024">
    <property type="entry name" value="rplS_bact"/>
    <property type="match status" value="1"/>
</dbReference>
<dbReference type="PANTHER" id="PTHR15680:SF9">
    <property type="entry name" value="LARGE RIBOSOMAL SUBUNIT PROTEIN BL19M"/>
    <property type="match status" value="1"/>
</dbReference>
<dbReference type="PANTHER" id="PTHR15680">
    <property type="entry name" value="RIBOSOMAL PROTEIN L19"/>
    <property type="match status" value="1"/>
</dbReference>
<dbReference type="Pfam" id="PF01245">
    <property type="entry name" value="Ribosomal_L19"/>
    <property type="match status" value="1"/>
</dbReference>
<dbReference type="PIRSF" id="PIRSF002191">
    <property type="entry name" value="Ribosomal_L19"/>
    <property type="match status" value="1"/>
</dbReference>
<dbReference type="PRINTS" id="PR00061">
    <property type="entry name" value="RIBOSOMALL19"/>
</dbReference>
<dbReference type="SUPFAM" id="SSF50104">
    <property type="entry name" value="Translation proteins SH3-like domain"/>
    <property type="match status" value="1"/>
</dbReference>
<dbReference type="PROSITE" id="PS01015">
    <property type="entry name" value="RIBOSOMAL_L19"/>
    <property type="match status" value="1"/>
</dbReference>
<gene>
    <name evidence="1" type="primary">rplS</name>
    <name type="ordered locus">ECUMN_2931</name>
</gene>
<proteinExistence type="inferred from homology"/>
<organism>
    <name type="scientific">Escherichia coli O17:K52:H18 (strain UMN026 / ExPEC)</name>
    <dbReference type="NCBI Taxonomy" id="585056"/>
    <lineage>
        <taxon>Bacteria</taxon>
        <taxon>Pseudomonadati</taxon>
        <taxon>Pseudomonadota</taxon>
        <taxon>Gammaproteobacteria</taxon>
        <taxon>Enterobacterales</taxon>
        <taxon>Enterobacteriaceae</taxon>
        <taxon>Escherichia</taxon>
    </lineage>
</organism>